<feature type="chain" id="PRO_0000159702" description="N-myc-interactor">
    <location>
        <begin position="1"/>
        <end position="307"/>
    </location>
</feature>
<feature type="domain" description="NID 1" evidence="16">
    <location>
        <begin position="103"/>
        <end position="192"/>
    </location>
</feature>
<feature type="domain" description="NID 2" evidence="16">
    <location>
        <begin position="201"/>
        <end position="292"/>
    </location>
</feature>
<feature type="region of interest" description="Disordered" evidence="3">
    <location>
        <begin position="1"/>
        <end position="24"/>
    </location>
</feature>
<feature type="coiled-coil region" evidence="2">
    <location>
        <begin position="30"/>
        <end position="64"/>
    </location>
</feature>
<feature type="modified residue" description="Phosphoserine" evidence="19">
    <location>
        <position position="16"/>
    </location>
</feature>
<feature type="cross-link" description="Glycyl lysine isopeptide (Lys-Gly) (interchain with G-Cter in ubiquitin)" evidence="6">
    <location>
        <position position="22"/>
    </location>
</feature>
<feature type="sequence variant" id="VAR_028190" description="In dbSNP:rs1048135.">
    <original>S</original>
    <variation>L</variation>
    <location>
        <position position="16"/>
    </location>
</feature>
<feature type="mutagenesis site" description="Loss of TRIM21-mediated ubiquitination and loss of Sendai virus-triggered type I IFN-beta production. Loss of TRIM21-mediated ubiquitination and decreased Sendai virus-triggered type I IFN-beta production; when associated with R-27." evidence="6">
    <original>K</original>
    <variation>R</variation>
    <location>
        <position position="22"/>
    </location>
</feature>
<feature type="mutagenesis site" description="No change in TRIM21-mediated ubiquitination and no change in Sendai virus-triggered type I IFN-beta production. Loss of TRIM21-mediated ubiquitination and decreased Sendai virus-triggered type I IFN-beta production; when associated with R-22." evidence="6">
    <original>K</original>
    <variation>R</variation>
    <location>
        <position position="27"/>
    </location>
</feature>
<feature type="mutagenesis site" description="No change in TRIM21-mediated ubiquitination; when associated with R-61." evidence="6">
    <original>K</original>
    <variation>R</variation>
    <location>
        <position position="56"/>
    </location>
</feature>
<feature type="mutagenesis site" description="No change in TRIM21-mediated ubiquitination; when associated with R-56." evidence="6">
    <original>K</original>
    <variation>R</variation>
    <location>
        <position position="61"/>
    </location>
</feature>
<feature type="mutagenesis site" description="No change in TRIM21-mediated ubiquitination; when associated with R-183." evidence="6">
    <original>K</original>
    <variation>R</variation>
    <location>
        <position position="176"/>
    </location>
</feature>
<feature type="mutagenesis site" description="No change in TRIM21-mediated ubiquitination; when associated with R-176." evidence="6">
    <original>K</original>
    <variation>R</variation>
    <location>
        <position position="183"/>
    </location>
</feature>
<feature type="sequence conflict" description="In Ref. 5; AAH21987." evidence="15" ref="5">
    <original>K</original>
    <variation>R</variation>
    <location>
        <position position="41"/>
    </location>
</feature>
<feature type="sequence conflict" description="In Ref. 1; AAC12949." evidence="15" ref="1">
    <original>S</original>
    <variation>F</variation>
    <location>
        <position position="184"/>
    </location>
</feature>
<protein>
    <recommendedName>
        <fullName evidence="14">N-myc-interactor</fullName>
        <shortName evidence="14">Nmi</shortName>
    </recommendedName>
    <alternativeName>
        <fullName evidence="13">N-myc and STAT interactor</fullName>
    </alternativeName>
</protein>
<reference key="1">
    <citation type="journal article" date="1996" name="Oncogene">
        <title>Isolation and characterization of Nmi, a novel partner of Myc proteins.</title>
        <authorList>
            <person name="Bao J."/>
            <person name="Zervos A.S."/>
        </authorList>
    </citation>
    <scope>NUCLEOTIDE SEQUENCE [MRNA]</scope>
    <source>
        <tissue>Cervix carcinoma</tissue>
    </source>
</reference>
<reference key="2">
    <citation type="journal article" date="2008" name="Nat. Methods">
        <title>Human protein factory for converting the transcriptome into an in vitro-expressed proteome.</title>
        <authorList>
            <person name="Goshima N."/>
            <person name="Kawamura Y."/>
            <person name="Fukumoto A."/>
            <person name="Miura A."/>
            <person name="Honma R."/>
            <person name="Satoh R."/>
            <person name="Wakamatsu A."/>
            <person name="Yamamoto J."/>
            <person name="Kimura K."/>
            <person name="Nishikawa T."/>
            <person name="Andoh T."/>
            <person name="Iida Y."/>
            <person name="Ishikawa K."/>
            <person name="Ito E."/>
            <person name="Kagawa N."/>
            <person name="Kaminaga C."/>
            <person name="Kanehori K."/>
            <person name="Kawakami B."/>
            <person name="Kenmochi K."/>
            <person name="Kimura R."/>
            <person name="Kobayashi M."/>
            <person name="Kuroita T."/>
            <person name="Kuwayama H."/>
            <person name="Maruyama Y."/>
            <person name="Matsuo K."/>
            <person name="Minami K."/>
            <person name="Mitsubori M."/>
            <person name="Mori M."/>
            <person name="Morishita R."/>
            <person name="Murase A."/>
            <person name="Nishikawa A."/>
            <person name="Nishikawa S."/>
            <person name="Okamoto T."/>
            <person name="Sakagami N."/>
            <person name="Sakamoto Y."/>
            <person name="Sasaki Y."/>
            <person name="Seki T."/>
            <person name="Sono S."/>
            <person name="Sugiyama A."/>
            <person name="Sumiya T."/>
            <person name="Takayama T."/>
            <person name="Takayama Y."/>
            <person name="Takeda H."/>
            <person name="Togashi T."/>
            <person name="Yahata K."/>
            <person name="Yamada H."/>
            <person name="Yanagisawa Y."/>
            <person name="Endo Y."/>
            <person name="Imamoto F."/>
            <person name="Kisu Y."/>
            <person name="Tanaka S."/>
            <person name="Isogai T."/>
            <person name="Imai J."/>
            <person name="Watanabe S."/>
            <person name="Nomura N."/>
        </authorList>
    </citation>
    <scope>NUCLEOTIDE SEQUENCE [LARGE SCALE MRNA]</scope>
</reference>
<reference key="3">
    <citation type="journal article" date="2005" name="Nature">
        <title>Generation and annotation of the DNA sequences of human chromosomes 2 and 4.</title>
        <authorList>
            <person name="Hillier L.W."/>
            <person name="Graves T.A."/>
            <person name="Fulton R.S."/>
            <person name="Fulton L.A."/>
            <person name="Pepin K.H."/>
            <person name="Minx P."/>
            <person name="Wagner-McPherson C."/>
            <person name="Layman D."/>
            <person name="Wylie K."/>
            <person name="Sekhon M."/>
            <person name="Becker M.C."/>
            <person name="Fewell G.A."/>
            <person name="Delehaunty K.D."/>
            <person name="Miner T.L."/>
            <person name="Nash W.E."/>
            <person name="Kremitzki C."/>
            <person name="Oddy L."/>
            <person name="Du H."/>
            <person name="Sun H."/>
            <person name="Bradshaw-Cordum H."/>
            <person name="Ali J."/>
            <person name="Carter J."/>
            <person name="Cordes M."/>
            <person name="Harris A."/>
            <person name="Isak A."/>
            <person name="van Brunt A."/>
            <person name="Nguyen C."/>
            <person name="Du F."/>
            <person name="Courtney L."/>
            <person name="Kalicki J."/>
            <person name="Ozersky P."/>
            <person name="Abbott S."/>
            <person name="Armstrong J."/>
            <person name="Belter E.A."/>
            <person name="Caruso L."/>
            <person name="Cedroni M."/>
            <person name="Cotton M."/>
            <person name="Davidson T."/>
            <person name="Desai A."/>
            <person name="Elliott G."/>
            <person name="Erb T."/>
            <person name="Fronick C."/>
            <person name="Gaige T."/>
            <person name="Haakenson W."/>
            <person name="Haglund K."/>
            <person name="Holmes A."/>
            <person name="Harkins R."/>
            <person name="Kim K."/>
            <person name="Kruchowski S.S."/>
            <person name="Strong C.M."/>
            <person name="Grewal N."/>
            <person name="Goyea E."/>
            <person name="Hou S."/>
            <person name="Levy A."/>
            <person name="Martinka S."/>
            <person name="Mead K."/>
            <person name="McLellan M.D."/>
            <person name="Meyer R."/>
            <person name="Randall-Maher J."/>
            <person name="Tomlinson C."/>
            <person name="Dauphin-Kohlberg S."/>
            <person name="Kozlowicz-Reilly A."/>
            <person name="Shah N."/>
            <person name="Swearengen-Shahid S."/>
            <person name="Snider J."/>
            <person name="Strong J.T."/>
            <person name="Thompson J."/>
            <person name="Yoakum M."/>
            <person name="Leonard S."/>
            <person name="Pearman C."/>
            <person name="Trani L."/>
            <person name="Radionenko M."/>
            <person name="Waligorski J.E."/>
            <person name="Wang C."/>
            <person name="Rock S.M."/>
            <person name="Tin-Wollam A.-M."/>
            <person name="Maupin R."/>
            <person name="Latreille P."/>
            <person name="Wendl M.C."/>
            <person name="Yang S.-P."/>
            <person name="Pohl C."/>
            <person name="Wallis J.W."/>
            <person name="Spieth J."/>
            <person name="Bieri T.A."/>
            <person name="Berkowicz N."/>
            <person name="Nelson J.O."/>
            <person name="Osborne J."/>
            <person name="Ding L."/>
            <person name="Meyer R."/>
            <person name="Sabo A."/>
            <person name="Shotland Y."/>
            <person name="Sinha P."/>
            <person name="Wohldmann P.E."/>
            <person name="Cook L.L."/>
            <person name="Hickenbotham M.T."/>
            <person name="Eldred J."/>
            <person name="Williams D."/>
            <person name="Jones T.A."/>
            <person name="She X."/>
            <person name="Ciccarelli F.D."/>
            <person name="Izaurralde E."/>
            <person name="Taylor J."/>
            <person name="Schmutz J."/>
            <person name="Myers R.M."/>
            <person name="Cox D.R."/>
            <person name="Huang X."/>
            <person name="McPherson J.D."/>
            <person name="Mardis E.R."/>
            <person name="Clifton S.W."/>
            <person name="Warren W.C."/>
            <person name="Chinwalla A.T."/>
            <person name="Eddy S.R."/>
            <person name="Marra M.A."/>
            <person name="Ovcharenko I."/>
            <person name="Furey T.S."/>
            <person name="Miller W."/>
            <person name="Eichler E.E."/>
            <person name="Bork P."/>
            <person name="Suyama M."/>
            <person name="Torrents D."/>
            <person name="Waterston R.H."/>
            <person name="Wilson R.K."/>
        </authorList>
    </citation>
    <scope>NUCLEOTIDE SEQUENCE [LARGE SCALE GENOMIC DNA]</scope>
</reference>
<reference key="4">
    <citation type="submission" date="2005-09" db="EMBL/GenBank/DDBJ databases">
        <authorList>
            <person name="Mural R.J."/>
            <person name="Istrail S."/>
            <person name="Sutton G.G."/>
            <person name="Florea L."/>
            <person name="Halpern A.L."/>
            <person name="Mobarry C.M."/>
            <person name="Lippert R."/>
            <person name="Walenz B."/>
            <person name="Shatkay H."/>
            <person name="Dew I."/>
            <person name="Miller J.R."/>
            <person name="Flanigan M.J."/>
            <person name="Edwards N.J."/>
            <person name="Bolanos R."/>
            <person name="Fasulo D."/>
            <person name="Halldorsson B.V."/>
            <person name="Hannenhalli S."/>
            <person name="Turner R."/>
            <person name="Yooseph S."/>
            <person name="Lu F."/>
            <person name="Nusskern D.R."/>
            <person name="Shue B.C."/>
            <person name="Zheng X.H."/>
            <person name="Zhong F."/>
            <person name="Delcher A.L."/>
            <person name="Huson D.H."/>
            <person name="Kravitz S.A."/>
            <person name="Mouchard L."/>
            <person name="Reinert K."/>
            <person name="Remington K.A."/>
            <person name="Clark A.G."/>
            <person name="Waterman M.S."/>
            <person name="Eichler E.E."/>
            <person name="Adams M.D."/>
            <person name="Hunkapiller M.W."/>
            <person name="Myers E.W."/>
            <person name="Venter J.C."/>
        </authorList>
    </citation>
    <scope>NUCLEOTIDE SEQUENCE [LARGE SCALE GENOMIC DNA]</scope>
</reference>
<reference key="5">
    <citation type="journal article" date="2004" name="Genome Res.">
        <title>The status, quality, and expansion of the NIH full-length cDNA project: the Mammalian Gene Collection (MGC).</title>
        <authorList>
            <consortium name="The MGC Project Team"/>
        </authorList>
    </citation>
    <scope>NUCLEOTIDE SEQUENCE [LARGE SCALE MRNA]</scope>
    <source>
        <tissue>Bone marrow</tissue>
        <tissue>Placenta</tissue>
    </source>
</reference>
<reference key="6">
    <citation type="journal article" date="1998" name="J. Interferon Cytokine Res.">
        <title>Interferon-induced upregulation and cytoplasmic localization of Myc-interacting protein Nmi.</title>
        <authorList>
            <person name="Lebrun S.J."/>
            <person name="Shpall R.L."/>
            <person name="Naumovski L."/>
        </authorList>
    </citation>
    <scope>SUBCELLULAR LOCATION</scope>
    <scope>TISSUE SPECIFICITY</scope>
    <scope>INDUCTION BY IFN-ALPHA ET IFN-GAMMA</scope>
</reference>
<reference key="7">
    <citation type="journal article" date="1999" name="Cell">
        <title>Functional association of Nmi with Stat5 and Stat1 in IL-2- and IFNgamma-mediated signaling.</title>
        <authorList>
            <person name="Zhu M.-H."/>
            <person name="John S."/>
            <person name="Berg M."/>
            <person name="Leonard W.J."/>
        </authorList>
    </citation>
    <scope>FUNCTION</scope>
    <scope>INTERACTION WITH STATS</scope>
    <scope>INDUCTION BY IL2 AND IFN-GAMMA</scope>
</reference>
<reference key="8">
    <citation type="journal article" date="2000" name="J. Biol. Chem.">
        <title>Interferon-alpha induces nmi-IFP35 heterodimeric complex formation that is affected by the phosphorylation of IFP35.</title>
        <authorList>
            <person name="Zhou X."/>
            <person name="Liao J."/>
            <person name="Meyerdierks A."/>
            <person name="Feng L."/>
            <person name="Naumovski L."/>
            <person name="Bottger E.C."/>
            <person name="Omary M.B."/>
        </authorList>
    </citation>
    <scope>FUNCTION</scope>
    <scope>INDUCTION BY IFN-ALPHA</scope>
    <scope>SUBCELLULAR LOCATION</scope>
    <scope>INTERACTION WITH IFI35</scope>
</reference>
<reference key="9">
    <citation type="journal article" date="2000" name="J. Biol. Chem.">
        <title>Interferon-inducible Myc/STAT-interacting protein Nmi associates with IFP 35 into a high molecular mass complex and inhibits proteasome-mediated degradation of IFP 35.</title>
        <authorList>
            <person name="Chen J."/>
            <person name="Shpall R.L."/>
            <person name="Meyerdierks A."/>
            <person name="Hagemeier M."/>
            <person name="Boettger E.C."/>
            <person name="Naumovski L."/>
        </authorList>
    </citation>
    <scope>FUNCTION</scope>
    <scope>INDUCTION BY IFN-ALPHA</scope>
    <scope>SUBCELLULAR LOCATION</scope>
    <scope>INTERACTION WITH IFI35</scope>
    <scope>DOMAIN</scope>
</reference>
<reference key="10">
    <citation type="journal article" date="2011" name="BMC Syst. Biol.">
        <title>Initial characterization of the human central proteome.</title>
        <authorList>
            <person name="Burkard T.R."/>
            <person name="Planyavsky M."/>
            <person name="Kaupe I."/>
            <person name="Breitwieser F.P."/>
            <person name="Buerckstuemmer T."/>
            <person name="Bennett K.L."/>
            <person name="Superti-Furga G."/>
            <person name="Colinge J."/>
        </authorList>
    </citation>
    <scope>IDENTIFICATION BY MASS SPECTROMETRY [LARGE SCALE ANALYSIS]</scope>
</reference>
<reference key="11">
    <citation type="journal article" date="2013" name="J. Proteome Res.">
        <title>Toward a comprehensive characterization of a human cancer cell phosphoproteome.</title>
        <authorList>
            <person name="Zhou H."/>
            <person name="Di Palma S."/>
            <person name="Preisinger C."/>
            <person name="Peng M."/>
            <person name="Polat A.N."/>
            <person name="Heck A.J."/>
            <person name="Mohammed S."/>
        </authorList>
    </citation>
    <scope>PHOSPHORYLATION [LARGE SCALE ANALYSIS] AT SER-16</scope>
    <scope>IDENTIFICATION BY MASS SPECTROMETRY [LARGE SCALE ANALYSIS]</scope>
    <source>
        <tissue>Erythroleukemia</tissue>
    </source>
</reference>
<reference key="12">
    <citation type="journal article" date="2015" name="Virology">
        <title>Trim21 regulates Nmi-IFI35 complex-mediated inhibition of innate antiviral response.</title>
        <authorList>
            <person name="Das A."/>
            <person name="Dinh P.X."/>
            <person name="Pattnaik A.K."/>
        </authorList>
    </citation>
    <scope>FUNCTION</scope>
    <scope>INTERACTION WITH IFI35 AND TRIM21</scope>
    <scope>DOMAIN</scope>
    <scope>UBIQUITINATION</scope>
    <scope>INDUCTION BY SENDAI VIRUS</scope>
    <scope>MUTAGENESIS OF 1-MET--VAL-92; LYS-22; LYS-27; LYS-56; LYS-61; 103-GLY--ASP-192; LYS-176; LYS-183 AND 201-GLY--GLU-307</scope>
</reference>
<reference key="13">
    <citation type="journal article" date="2017" name="Nat. Commun.">
        <title>NMI and IFP35 serve as proinflammatory DAMPs during cellular infection and injury.</title>
        <authorList>
            <person name="Xiahou Z."/>
            <person name="Wang X."/>
            <person name="Shen J."/>
            <person name="Zhu X."/>
            <person name="Xu F."/>
            <person name="Hu R."/>
            <person name="Guo D."/>
            <person name="Li H."/>
            <person name="Tian Y."/>
            <person name="Liu Y."/>
            <person name="Liang H."/>
        </authorList>
    </citation>
    <scope>FUNCTION</scope>
    <scope>SUBCELLULAR LOCATION</scope>
    <scope>TISSUE SPECIFICITY</scope>
    <scope>INTERACTION WITH TLR4</scope>
</reference>
<reference key="14">
    <citation type="journal article" date="2018" name="Acta Physiol.">
        <title>Interferon-induced protein 35 inhibits endothelial cell proliferation, migration and re-endothelialization of injured arteries by inhibiting the nuclear factor-kappa B pathway.</title>
        <authorList>
            <person name="Jian D."/>
            <person name="Wang W."/>
            <person name="Zhou X."/>
            <person name="Jia Z."/>
            <person name="Wang J."/>
            <person name="Yang M."/>
            <person name="Zhao W."/>
            <person name="Jiang Z."/>
            <person name="Hu X."/>
            <person name="Zhu J."/>
        </authorList>
    </citation>
    <scope>FUNCTION</scope>
</reference>
<reference key="15">
    <citation type="journal article" date="2018" name="PLoS Pathog.">
        <title>Human cytomegalovirus UL23 inhibits transcription of interferon-gamma stimulated genes and blocks antiviral interferon-gamma responses by interacting with human N-myc interactor protein.</title>
        <authorList>
            <person name="Feng L."/>
            <person name="Sheng J."/>
            <person name="Vu G.P."/>
            <person name="Liu Y."/>
            <person name="Foo C."/>
            <person name="Wu S."/>
            <person name="Trang P."/>
            <person name="Paliza-Carre M."/>
            <person name="Ran Y."/>
            <person name="Yang X."/>
            <person name="Sun X."/>
            <person name="Deng Z."/>
            <person name="Zhou T."/>
            <person name="Lu S."/>
            <person name="Li H."/>
            <person name="Liu F."/>
        </authorList>
    </citation>
    <scope>FUNCTION</scope>
    <scope>INTERACTION WITH HUMAN CYTOMEGALOVIRUS PROTEIN UL23</scope>
    <scope>SUBCELLULAR LOCATION</scope>
</reference>
<gene>
    <name evidence="18" type="primary">NMI</name>
</gene>
<sequence length="307" mass="35057">MEADKDDTQQILKEHSPDEFIKDEQNKGLIDEITKKNIQLKKEIQKLETELQEATKEFQIKEDIPETKMKFLSVETPENDSQLSNISCSFQVSSKVPYEIQKGQALITFEKEEVAQNVVSMSKHHVQIKDVNLEVTAKPVPLNSGVRFQVYVEVSKMKINVTEIPDTLREDQMRDKLELSFSKSRNGGGEVDRVDYDRQSGSAVITFVEIGVADKILKKKEYPLYINQTCHRVTVSPYTEIHLKKYQIFSGTSKRTVLLTGMEGIQMDEEIVEDLINIHFQRAKNGGGEVDVVKCSLGQPHIAYFEE</sequence>
<proteinExistence type="evidence at protein level"/>
<keyword id="KW-0175">Coiled coil</keyword>
<keyword id="KW-0963">Cytoplasm</keyword>
<keyword id="KW-0945">Host-virus interaction</keyword>
<keyword id="KW-0391">Immunity</keyword>
<keyword id="KW-0399">Innate immunity</keyword>
<keyword id="KW-1017">Isopeptide bond</keyword>
<keyword id="KW-0539">Nucleus</keyword>
<keyword id="KW-0597">Phosphoprotein</keyword>
<keyword id="KW-1267">Proteomics identification</keyword>
<keyword id="KW-1185">Reference proteome</keyword>
<keyword id="KW-0964">Secreted</keyword>
<keyword id="KW-0832">Ubl conjugation</keyword>
<dbReference type="EMBL" id="U32849">
    <property type="protein sequence ID" value="AAC12949.1"/>
    <property type="molecule type" value="mRNA"/>
</dbReference>
<dbReference type="EMBL" id="AB451305">
    <property type="protein sequence ID" value="BAG70119.1"/>
    <property type="molecule type" value="mRNA"/>
</dbReference>
<dbReference type="EMBL" id="AB451436">
    <property type="protein sequence ID" value="BAG70250.1"/>
    <property type="molecule type" value="mRNA"/>
</dbReference>
<dbReference type="EMBL" id="AC009311">
    <property type="protein sequence ID" value="AAY15066.1"/>
    <property type="molecule type" value="Genomic_DNA"/>
</dbReference>
<dbReference type="EMBL" id="CH471058">
    <property type="protein sequence ID" value="EAX11513.1"/>
    <property type="molecule type" value="Genomic_DNA"/>
</dbReference>
<dbReference type="EMBL" id="BC001268">
    <property type="protein sequence ID" value="AAH01268.1"/>
    <property type="molecule type" value="mRNA"/>
</dbReference>
<dbReference type="EMBL" id="BC021987">
    <property type="protein sequence ID" value="AAH21987.1"/>
    <property type="molecule type" value="mRNA"/>
</dbReference>
<dbReference type="CCDS" id="CCDS2192.1"/>
<dbReference type="RefSeq" id="NP_004679.2">
    <property type="nucleotide sequence ID" value="NM_004688.3"/>
</dbReference>
<dbReference type="RefSeq" id="XP_005246998.1">
    <property type="nucleotide sequence ID" value="XM_005246941.3"/>
</dbReference>
<dbReference type="RefSeq" id="XP_016860736.1">
    <property type="nucleotide sequence ID" value="XM_017005247.1"/>
</dbReference>
<dbReference type="BioGRID" id="114561">
    <property type="interactions" value="120"/>
</dbReference>
<dbReference type="CORUM" id="Q13287"/>
<dbReference type="FunCoup" id="Q13287">
    <property type="interactions" value="1251"/>
</dbReference>
<dbReference type="IntAct" id="Q13287">
    <property type="interactions" value="85"/>
</dbReference>
<dbReference type="MINT" id="Q13287"/>
<dbReference type="STRING" id="9606.ENSP00000243346"/>
<dbReference type="GlyGen" id="Q13287">
    <property type="glycosylation" value="1 site, 1 O-linked glycan (1 site)"/>
</dbReference>
<dbReference type="iPTMnet" id="Q13287"/>
<dbReference type="PhosphoSitePlus" id="Q13287"/>
<dbReference type="BioMuta" id="NMI"/>
<dbReference type="DMDM" id="116242679"/>
<dbReference type="jPOST" id="Q13287"/>
<dbReference type="MassIVE" id="Q13287"/>
<dbReference type="PaxDb" id="9606-ENSP00000243346"/>
<dbReference type="PeptideAtlas" id="Q13287"/>
<dbReference type="ProteomicsDB" id="59282"/>
<dbReference type="Pumba" id="Q13287"/>
<dbReference type="Antibodypedia" id="1783">
    <property type="antibodies" value="274 antibodies from 28 providers"/>
</dbReference>
<dbReference type="DNASU" id="9111"/>
<dbReference type="Ensembl" id="ENST00000243346.10">
    <property type="protein sequence ID" value="ENSP00000243346.5"/>
    <property type="gene ID" value="ENSG00000123609.11"/>
</dbReference>
<dbReference type="GeneID" id="9111"/>
<dbReference type="KEGG" id="hsa:9111"/>
<dbReference type="MANE-Select" id="ENST00000243346.10">
    <property type="protein sequence ID" value="ENSP00000243346.5"/>
    <property type="RefSeq nucleotide sequence ID" value="NM_004688.3"/>
    <property type="RefSeq protein sequence ID" value="NP_004679.2"/>
</dbReference>
<dbReference type="UCSC" id="uc002txi.3">
    <property type="organism name" value="human"/>
</dbReference>
<dbReference type="AGR" id="HGNC:7854"/>
<dbReference type="CTD" id="9111"/>
<dbReference type="DisGeNET" id="9111"/>
<dbReference type="GeneCards" id="NMI"/>
<dbReference type="HGNC" id="HGNC:7854">
    <property type="gene designation" value="NMI"/>
</dbReference>
<dbReference type="HPA" id="ENSG00000123609">
    <property type="expression patterns" value="Low tissue specificity"/>
</dbReference>
<dbReference type="MIM" id="603525">
    <property type="type" value="gene"/>
</dbReference>
<dbReference type="neXtProt" id="NX_Q13287"/>
<dbReference type="OpenTargets" id="ENSG00000123609"/>
<dbReference type="PharmGKB" id="PA31659"/>
<dbReference type="VEuPathDB" id="HostDB:ENSG00000123609"/>
<dbReference type="eggNOG" id="ENOG502QVH1">
    <property type="taxonomic scope" value="Eukaryota"/>
</dbReference>
<dbReference type="GeneTree" id="ENSGT00530000063686"/>
<dbReference type="HOGENOM" id="CLU_047262_0_0_1"/>
<dbReference type="InParanoid" id="Q13287"/>
<dbReference type="OMA" id="IYAQIPE"/>
<dbReference type="OrthoDB" id="9903237at2759"/>
<dbReference type="PAN-GO" id="Q13287">
    <property type="GO annotations" value="1 GO annotation based on evolutionary models"/>
</dbReference>
<dbReference type="PhylomeDB" id="Q13287"/>
<dbReference type="TreeFam" id="TF332752"/>
<dbReference type="PathwayCommons" id="Q13287"/>
<dbReference type="Reactome" id="R-HSA-9692916">
    <property type="pathway name" value="SARS-CoV-1 activates/modulates innate immune responses"/>
</dbReference>
<dbReference type="SignaLink" id="Q13287"/>
<dbReference type="SIGNOR" id="Q13287"/>
<dbReference type="BioGRID-ORCS" id="9111">
    <property type="hits" value="27 hits in 1160 CRISPR screens"/>
</dbReference>
<dbReference type="ChiTaRS" id="NMI">
    <property type="organism name" value="human"/>
</dbReference>
<dbReference type="GeneWiki" id="N-myc-interactor"/>
<dbReference type="GenomeRNAi" id="9111"/>
<dbReference type="Pharos" id="Q13287">
    <property type="development level" value="Tbio"/>
</dbReference>
<dbReference type="PRO" id="PR:Q13287"/>
<dbReference type="Proteomes" id="UP000005640">
    <property type="component" value="Chromosome 2"/>
</dbReference>
<dbReference type="RNAct" id="Q13287">
    <property type="molecule type" value="protein"/>
</dbReference>
<dbReference type="Bgee" id="ENSG00000123609">
    <property type="expression patterns" value="Expressed in monocyte and 190 other cell types or tissues"/>
</dbReference>
<dbReference type="ExpressionAtlas" id="Q13287">
    <property type="expression patterns" value="baseline and differential"/>
</dbReference>
<dbReference type="GO" id="GO:0005737">
    <property type="term" value="C:cytoplasm"/>
    <property type="evidence" value="ECO:0000314"/>
    <property type="project" value="UniProtKB"/>
</dbReference>
<dbReference type="GO" id="GO:0005829">
    <property type="term" value="C:cytosol"/>
    <property type="evidence" value="ECO:0000314"/>
    <property type="project" value="UniProtKB"/>
</dbReference>
<dbReference type="GO" id="GO:0005615">
    <property type="term" value="C:extracellular space"/>
    <property type="evidence" value="ECO:0000314"/>
    <property type="project" value="UniProtKB"/>
</dbReference>
<dbReference type="GO" id="GO:0016020">
    <property type="term" value="C:membrane"/>
    <property type="evidence" value="ECO:0000314"/>
    <property type="project" value="UniProtKB"/>
</dbReference>
<dbReference type="GO" id="GO:0005654">
    <property type="term" value="C:nucleoplasm"/>
    <property type="evidence" value="ECO:0000314"/>
    <property type="project" value="HPA"/>
</dbReference>
<dbReference type="GO" id="GO:0005634">
    <property type="term" value="C:nucleus"/>
    <property type="evidence" value="ECO:0000314"/>
    <property type="project" value="UniProtKB"/>
</dbReference>
<dbReference type="GO" id="GO:0042802">
    <property type="term" value="F:identical protein binding"/>
    <property type="evidence" value="ECO:0000353"/>
    <property type="project" value="IntAct"/>
</dbReference>
<dbReference type="GO" id="GO:0007259">
    <property type="term" value="P:cell surface receptor signaling pathway via JAK-STAT"/>
    <property type="evidence" value="ECO:0000304"/>
    <property type="project" value="UniProtKB"/>
</dbReference>
<dbReference type="GO" id="GO:0045087">
    <property type="term" value="P:innate immune response"/>
    <property type="evidence" value="ECO:0007669"/>
    <property type="project" value="UniProtKB-KW"/>
</dbReference>
<dbReference type="GO" id="GO:0002281">
    <property type="term" value="P:macrophage activation involved in immune response"/>
    <property type="evidence" value="ECO:0000314"/>
    <property type="project" value="UniProtKB"/>
</dbReference>
<dbReference type="GO" id="GO:0008285">
    <property type="term" value="P:negative regulation of cell population proliferation"/>
    <property type="evidence" value="ECO:0000315"/>
    <property type="project" value="UniProtKB"/>
</dbReference>
<dbReference type="GO" id="GO:0045824">
    <property type="term" value="P:negative regulation of innate immune response"/>
    <property type="evidence" value="ECO:0000315"/>
    <property type="project" value="UniProtKB"/>
</dbReference>
<dbReference type="GO" id="GO:0032687">
    <property type="term" value="P:negative regulation of interferon-alpha production"/>
    <property type="evidence" value="ECO:0007669"/>
    <property type="project" value="Ensembl"/>
</dbReference>
<dbReference type="GO" id="GO:0032688">
    <property type="term" value="P:negative regulation of interferon-beta production"/>
    <property type="evidence" value="ECO:0007669"/>
    <property type="project" value="Ensembl"/>
</dbReference>
<dbReference type="GO" id="GO:1901223">
    <property type="term" value="P:negative regulation of non-canonical NF-kappaB signal transduction"/>
    <property type="evidence" value="ECO:0000314"/>
    <property type="project" value="UniProtKB"/>
</dbReference>
<dbReference type="GO" id="GO:0050729">
    <property type="term" value="P:positive regulation of inflammatory response"/>
    <property type="evidence" value="ECO:0000250"/>
    <property type="project" value="UniProtKB"/>
</dbReference>
<dbReference type="GO" id="GO:0045089">
    <property type="term" value="P:positive regulation of innate immune response"/>
    <property type="evidence" value="ECO:0000250"/>
    <property type="project" value="UniProtKB"/>
</dbReference>
<dbReference type="GO" id="GO:1901224">
    <property type="term" value="P:positive regulation of non-canonical NF-kappaB signal transduction"/>
    <property type="evidence" value="ECO:0000314"/>
    <property type="project" value="UniProtKB"/>
</dbReference>
<dbReference type="GO" id="GO:1902524">
    <property type="term" value="P:positive regulation of protein K48-linked ubiquitination"/>
    <property type="evidence" value="ECO:0007669"/>
    <property type="project" value="Ensembl"/>
</dbReference>
<dbReference type="GO" id="GO:0070936">
    <property type="term" value="P:protein K48-linked ubiquitination"/>
    <property type="evidence" value="ECO:0007669"/>
    <property type="project" value="Ensembl"/>
</dbReference>
<dbReference type="GO" id="GO:0009615">
    <property type="term" value="P:response to virus"/>
    <property type="evidence" value="ECO:0000250"/>
    <property type="project" value="UniProtKB"/>
</dbReference>
<dbReference type="GO" id="GO:0034142">
    <property type="term" value="P:toll-like receptor 4 signaling pathway"/>
    <property type="evidence" value="ECO:0000250"/>
    <property type="project" value="UniProtKB"/>
</dbReference>
<dbReference type="CDD" id="cd12544">
    <property type="entry name" value="RRM_NMI"/>
    <property type="match status" value="1"/>
</dbReference>
<dbReference type="FunFam" id="3.30.70.330:FF:000300">
    <property type="entry name" value="Interferon-induced protein 35"/>
    <property type="match status" value="1"/>
</dbReference>
<dbReference type="Gene3D" id="3.30.70.330">
    <property type="match status" value="2"/>
</dbReference>
<dbReference type="InterPro" id="IPR009909">
    <property type="entry name" value="Nmi/IFP35_dom"/>
</dbReference>
<dbReference type="InterPro" id="IPR009938">
    <property type="entry name" value="Nmi/IFP35_N"/>
</dbReference>
<dbReference type="InterPro" id="IPR012677">
    <property type="entry name" value="Nucleotide-bd_a/b_plait_sf"/>
</dbReference>
<dbReference type="PANTHER" id="PTHR15225">
    <property type="entry name" value="INTERFERON-INDUCED PROTEIN 35/NMI N-MYC/STAT INTERACTING PROTEIN"/>
    <property type="match status" value="1"/>
</dbReference>
<dbReference type="PANTHER" id="PTHR15225:SF4">
    <property type="entry name" value="N-MYC-INTERACTOR"/>
    <property type="match status" value="1"/>
</dbReference>
<dbReference type="Pfam" id="PF07334">
    <property type="entry name" value="IFP_35_N"/>
    <property type="match status" value="1"/>
</dbReference>
<dbReference type="Pfam" id="PF07292">
    <property type="entry name" value="NID"/>
    <property type="match status" value="2"/>
</dbReference>
<name>NMI_HUMAN</name>
<comment type="function">
    <text evidence="1 4 5 6 7 8 12">Acts as a signaling pathway regulator involved in innate immune system response (PubMed:26342464, PubMed:29038465, PubMed:29350881, PubMed:9989503). In response to interleukin 2/IL2 and interferon IFN-gamma/IFNG, interacts with signal transducer and activator of transcription/STAT which activate the transcription of downstream genes involved in a multitude of signals for development and homeostasis (PubMed:29377960, PubMed:9989503). Enhances the recruitment of CBP/p300 coactivators to STAT1 and STAT5, resulting in increased STAT1- and STAT5-dependent transcription (PubMed:9989503). In response to interferon IFN-alpha, associates in a complex with signaling pathway regulator IFI35 to regulate immune response; the complex formation prevents proteasome-mediated degradation of IFI35 (PubMed:10779520, PubMed:10950963). In complex with IFI35, inhibits virus-triggered type I IFN-beta production when ubiquitinated by ubiquitin-protein ligase TRIM21 (PubMed:26342464). In complex with IFI35, negatively regulates nuclear factor NF-kappa-B signaling by inhibiting the nuclear translocation, activation and transcription of NF-kappa-B subunit p65/RELA, resulting in the inhibition of endothelial cell proliferation, migration and re-endothelialization of injured arteries (PubMed:29350881). Negatively regulates virus-triggered type I interferon/IFN production by inducing proteosome-dependent degradation of IRF7, a transcriptional regulator of type I IFN, thereby interfering with cellular antiviral responses (By similarity). Beside its role as an intracellular signaling pathway regulator, also functions extracellularly as damage-associated molecular patterns (DAMPs) to promote inflammation, when actively released by macrophage to the extracellular space during cell injury or pathogen invasion (PubMed:29038465). Macrophage-secreted NMI activates NF-kappa-B signaling in adjacent macrophages through Toll-like receptor 4/TLR4 binding and activation, thereby inducing NF-kappa-B translocation from the cytoplasm into the nucleus which promotes the release of pro-inflammatory cytokines (PubMed:29038465).</text>
</comment>
<comment type="subunit">
    <text evidence="1 4 5 6 7 10 12">Interacts with MYCN and MYC, as well as with other transcription factors with a Zip, HLH or a HLH-Zip motif (PubMed:8668343). Interacts with all STAT proteins except STAT2 (PubMed:9989503). Interacts with IRF7, the interaction is direct and leads to the inhibition of IRF7-mediated type I IFN production (By similarity). Interacts (via coiled-coil domain) with TRIM21 (via the SPRY domain); the interaction leads to 'Lys-63'-linked ubiquitination of NMI (PubMed:26342464). Interacts with IFI35; the interaction is direct and is facilitated by TRIM21 (PubMed:10779520, PubMed:10950963, PubMed:26342464). Interacts with TLR4; the interaction is direct and leads to NF-kappa-B activation (PubMed:29038465).</text>
</comment>
<comment type="subunit">
    <text evidence="9">(Microbial infection) Interacts with human cytomegalovirus protein UL23; this interaction inhibits NMI-mediated transcription of interferon-gamma stimulated genes.</text>
</comment>
<comment type="interaction">
    <interactant intactId="EBI-372942">
        <id>Q13287</id>
    </interactant>
    <interactant intactId="EBI-750554">
        <id>Q9XRX5</id>
        <label>ANKRD13C-DT</label>
    </interactant>
    <organismsDiffer>false</organismsDiffer>
    <experiments>8</experiments>
</comment>
<comment type="interaction">
    <interactant intactId="EBI-372942">
        <id>Q13287</id>
    </interactant>
    <interactant intactId="EBI-12051311">
        <id>Q9XRX5-2</id>
        <label>ANKRD13C-DT</label>
    </interactant>
    <organismsDiffer>false</organismsDiffer>
    <experiments>3</experiments>
</comment>
<comment type="interaction">
    <interactant intactId="EBI-372942">
        <id>Q13287</id>
    </interactant>
    <interactant intactId="EBI-10826195">
        <id>Q6PJG6</id>
        <label>BRAT1</label>
    </interactant>
    <organismsDiffer>false</organismsDiffer>
    <experiments>3</experiments>
</comment>
<comment type="interaction">
    <interactant intactId="EBI-372942">
        <id>Q13287</id>
    </interactant>
    <interactant intactId="EBI-714781">
        <id>Q9HCU9</id>
        <label>BRMS1</label>
    </interactant>
    <organismsDiffer>false</organismsDiffer>
    <experiments>7</experiments>
</comment>
<comment type="interaction">
    <interactant intactId="EBI-372942">
        <id>Q13287</id>
    </interactant>
    <interactant intactId="EBI-747505">
        <id>Q8TAB5</id>
        <label>C1orf216</label>
    </interactant>
    <organismsDiffer>false</organismsDiffer>
    <experiments>6</experiments>
</comment>
<comment type="interaction">
    <interactant intactId="EBI-372942">
        <id>Q13287</id>
    </interactant>
    <interactant intactId="EBI-2961725">
        <id>Q96LT7</id>
        <label>C9orf72</label>
    </interactant>
    <organismsDiffer>false</organismsDiffer>
    <experiments>6</experiments>
</comment>
<comment type="interaction">
    <interactant intactId="EBI-372942">
        <id>Q13287</id>
    </interactant>
    <interactant intactId="EBI-10253274">
        <id>Q6P9H4</id>
        <label>CNKSR3</label>
    </interactant>
    <organismsDiffer>false</organismsDiffer>
    <experiments>6</experiments>
</comment>
<comment type="interaction">
    <interactant intactId="EBI-372942">
        <id>Q13287</id>
    </interactant>
    <interactant intactId="EBI-2510162">
        <id>Q9H9Q2</id>
        <label>COPS7B</label>
    </interactant>
    <organismsDiffer>false</organismsDiffer>
    <experiments>9</experiments>
</comment>
<comment type="interaction">
    <interactant intactId="EBI-372942">
        <id>Q13287</id>
    </interactant>
    <interactant intactId="EBI-744586">
        <id>Q9Y6C2</id>
        <label>EMILIN1</label>
    </interactant>
    <organismsDiffer>false</organismsDiffer>
    <experiments>4</experiments>
</comment>
<comment type="interaction">
    <interactant intactId="EBI-372942">
        <id>Q13287</id>
    </interactant>
    <interactant intactId="EBI-715444">
        <id>P23434</id>
        <label>GCSH</label>
    </interactant>
    <organismsDiffer>false</organismsDiffer>
    <experiments>4</experiments>
</comment>
<comment type="interaction">
    <interactant intactId="EBI-372942">
        <id>Q13287</id>
    </interactant>
    <interactant intactId="EBI-10242961">
        <id>Q53XL7</id>
        <label>GCSH</label>
    </interactant>
    <organismsDiffer>false</organismsDiffer>
    <experiments>6</experiments>
</comment>
<comment type="interaction">
    <interactant intactId="EBI-372942">
        <id>Q13287</id>
    </interactant>
    <interactant intactId="EBI-10181276">
        <id>Q0D2H9</id>
        <label>GOLGA8DP</label>
    </interactant>
    <organismsDiffer>false</organismsDiffer>
    <experiments>6</experiments>
</comment>
<comment type="interaction">
    <interactant intactId="EBI-372942">
        <id>Q13287</id>
    </interactant>
    <interactant intactId="EBI-750003">
        <id>Q8N4P3</id>
        <label>HDDC3</label>
    </interactant>
    <organismsDiffer>false</organismsDiffer>
    <experiments>7</experiments>
</comment>
<comment type="interaction">
    <interactant intactId="EBI-372942">
        <id>Q13287</id>
    </interactant>
    <interactant intactId="EBI-12037393">
        <id>Q8N4P3-2</id>
        <label>HDDC3</label>
    </interactant>
    <organismsDiffer>false</organismsDiffer>
    <experiments>6</experiments>
</comment>
<comment type="interaction">
    <interactant intactId="EBI-372942">
        <id>Q13287</id>
    </interactant>
    <interactant intactId="EBI-16429135">
        <id>A0A0S2Z4Q4</id>
        <label>HGS</label>
    </interactant>
    <organismsDiffer>false</organismsDiffer>
    <experiments>3</experiments>
</comment>
<comment type="interaction">
    <interactant intactId="EBI-372942">
        <id>Q13287</id>
    </interactant>
    <interactant intactId="EBI-740220">
        <id>O14964</id>
        <label>HGS</label>
    </interactant>
    <organismsDiffer>false</organismsDiffer>
    <experiments>10</experiments>
</comment>
<comment type="interaction">
    <interactant intactId="EBI-372942">
        <id>Q13287</id>
    </interactant>
    <interactant intactId="EBI-10289199">
        <id>Q96IS6</id>
        <label>HSPA8</label>
    </interactant>
    <organismsDiffer>false</organismsDiffer>
    <experiments>6</experiments>
</comment>
<comment type="interaction">
    <interactant intactId="EBI-372942">
        <id>Q13287</id>
    </interactant>
    <interactant intactId="EBI-12823003">
        <id>P80217-2</id>
        <label>IFI35</label>
    </interactant>
    <organismsDiffer>false</organismsDiffer>
    <experiments>4</experiments>
</comment>
<comment type="interaction">
    <interactant intactId="EBI-372942">
        <id>Q13287</id>
    </interactant>
    <interactant intactId="EBI-8473670">
        <id>O95447</id>
        <label>LCA5L</label>
    </interactant>
    <organismsDiffer>false</organismsDiffer>
    <experiments>6</experiments>
</comment>
<comment type="interaction">
    <interactant intactId="EBI-372942">
        <id>Q13287</id>
    </interactant>
    <interactant intactId="EBI-712181">
        <id>Q15013</id>
        <label>MAD2L1BP</label>
    </interactant>
    <organismsDiffer>false</organismsDiffer>
    <experiments>3</experiments>
</comment>
<comment type="interaction">
    <interactant intactId="EBI-372942">
        <id>Q13287</id>
    </interactant>
    <interactant intactId="EBI-766064">
        <id>Q9Y217</id>
        <label>MTMR6</label>
    </interactant>
    <organismsDiffer>false</organismsDiffer>
    <experiments>6</experiments>
</comment>
<comment type="interaction">
    <interactant intactId="EBI-372942">
        <id>Q13287</id>
    </interactant>
    <interactant intactId="EBI-744593">
        <id>Q96QG7</id>
        <label>MTMR9</label>
    </interactant>
    <organismsDiffer>false</organismsDiffer>
    <experiments>9</experiments>
</comment>
<comment type="interaction">
    <interactant intactId="EBI-372942">
        <id>Q13287</id>
    </interactant>
    <interactant intactId="EBI-878369">
        <id>P04198</id>
        <label>MYCN</label>
    </interactant>
    <organismsDiffer>false</organismsDiffer>
    <experiments>3</experiments>
</comment>
<comment type="interaction">
    <interactant intactId="EBI-372942">
        <id>Q13287</id>
    </interactant>
    <interactant intactId="EBI-12247808">
        <id>Q5VTT5-2</id>
        <label>MYOM3</label>
    </interactant>
    <organismsDiffer>false</organismsDiffer>
    <experiments>6</experiments>
</comment>
<comment type="interaction">
    <interactant intactId="EBI-372942">
        <id>Q13287</id>
    </interactant>
    <interactant intactId="EBI-372942">
        <id>Q13287</id>
        <label>NMI</label>
    </interactant>
    <organismsDiffer>false</organismsDiffer>
    <experiments>6</experiments>
</comment>
<comment type="interaction">
    <interactant intactId="EBI-372942">
        <id>Q13287</id>
    </interactant>
    <interactant intactId="EBI-7543896">
        <id>O95171</id>
        <label>SCEL</label>
    </interactant>
    <organismsDiffer>false</organismsDiffer>
    <experiments>7</experiments>
</comment>
<comment type="interaction">
    <interactant intactId="EBI-372942">
        <id>Q13287</id>
    </interactant>
    <interactant intactId="EBI-12056699">
        <id>O95171-2</id>
        <label>SCEL</label>
    </interactant>
    <organismsDiffer>false</organismsDiffer>
    <experiments>3</experiments>
</comment>
<comment type="interaction">
    <interactant intactId="EBI-372942">
        <id>Q13287</id>
    </interactant>
    <interactant intactId="EBI-1104535">
        <id>Q86XK3</id>
        <label>SFR1</label>
    </interactant>
    <organismsDiffer>false</organismsDiffer>
    <experiments>6</experiments>
</comment>
<comment type="interaction">
    <interactant intactId="EBI-372942">
        <id>Q13287</id>
    </interactant>
    <interactant intactId="EBI-749483">
        <id>O75971</id>
        <label>SNAPC5</label>
    </interactant>
    <organismsDiffer>false</organismsDiffer>
    <experiments>8</experiments>
</comment>
<comment type="interaction">
    <interactant intactId="EBI-372942">
        <id>Q13287</id>
    </interactant>
    <interactant intactId="EBI-12004298">
        <id>O75971-2</id>
        <label>SNAPC5</label>
    </interactant>
    <organismsDiffer>false</organismsDiffer>
    <experiments>3</experiments>
</comment>
<comment type="interaction">
    <interactant intactId="EBI-372942">
        <id>Q13287</id>
    </interactant>
    <interactant intactId="EBI-1167533">
        <id>P56693</id>
        <label>SOX10</label>
    </interactant>
    <organismsDiffer>false</organismsDiffer>
    <experiments>2</experiments>
</comment>
<comment type="interaction">
    <interactant intactId="EBI-372942">
        <id>Q13287</id>
    </interactant>
    <interactant intactId="EBI-1186119">
        <id>P51692</id>
        <label>STAT5B</label>
    </interactant>
    <organismsDiffer>false</organismsDiffer>
    <experiments>7</experiments>
</comment>
<comment type="interaction">
    <interactant intactId="EBI-372942">
        <id>Q13287</id>
    </interactant>
    <interactant intactId="EBI-1186478">
        <id>P42226</id>
        <label>STAT6</label>
    </interactant>
    <organismsDiffer>false</organismsDiffer>
    <experiments>2</experiments>
</comment>
<comment type="interaction">
    <interactant intactId="EBI-372942">
        <id>Q13287</id>
    </interactant>
    <interactant intactId="EBI-717429">
        <id>Q8NA92</id>
        <label>THAP8</label>
    </interactant>
    <organismsDiffer>false</organismsDiffer>
    <experiments>3</experiments>
</comment>
<comment type="interaction">
    <interactant intactId="EBI-372942">
        <id>Q13287</id>
    </interactant>
    <interactant intactId="EBI-523498">
        <id>O00463</id>
        <label>TRAF5</label>
    </interactant>
    <organismsDiffer>false</organismsDiffer>
    <experiments>12</experiments>
</comment>
<comment type="interaction">
    <interactant intactId="EBI-372942">
        <id>Q13287</id>
    </interactant>
    <interactant intactId="EBI-2341648">
        <id>Q6ZMU5</id>
        <label>TRIM72</label>
    </interactant>
    <organismsDiffer>false</organismsDiffer>
    <experiments>3</experiments>
</comment>
<comment type="interaction">
    <interactant intactId="EBI-372942">
        <id>Q13287</id>
    </interactant>
    <interactant intactId="EBI-355068">
        <id>Q13748</id>
        <label>TUBA3D</label>
    </interactant>
    <organismsDiffer>false</organismsDiffer>
    <experiments>2</experiments>
</comment>
<comment type="interaction">
    <interactant intactId="EBI-372942">
        <id>Q13287</id>
    </interactant>
    <interactant intactId="EBI-2551023">
        <id>Q6PEY2</id>
        <label>TUBA3E</label>
    </interactant>
    <organismsDiffer>false</organismsDiffer>
    <experiments>9</experiments>
</comment>
<comment type="interaction">
    <interactant intactId="EBI-372942">
        <id>Q13287</id>
    </interactant>
    <interactant intactId="EBI-359793">
        <id>P40222</id>
        <label>TXLNA</label>
    </interactant>
    <organismsDiffer>false</organismsDiffer>
    <experiments>9</experiments>
</comment>
<comment type="interaction">
    <interactant intactId="EBI-372942">
        <id>Q13287</id>
    </interactant>
    <interactant intactId="EBI-6116822">
        <id>Q8N3L3</id>
        <label>TXLNB</label>
    </interactant>
    <organismsDiffer>false</organismsDiffer>
    <experiments>9</experiments>
</comment>
<comment type="interaction">
    <interactant intactId="EBI-372942">
        <id>Q13287</id>
    </interactant>
    <interactant intactId="EBI-10180829">
        <id>Q7KZS0</id>
        <label>UBE2I</label>
    </interactant>
    <organismsDiffer>false</organismsDiffer>
    <experiments>3</experiments>
</comment>
<comment type="interaction">
    <interactant intactId="EBI-372942">
        <id>Q13287</id>
    </interactant>
    <interactant intactId="EBI-9977437">
        <id>A8K2R3</id>
    </interactant>
    <organismsDiffer>false</organismsDiffer>
    <experiments>6</experiments>
</comment>
<comment type="interaction">
    <interactant intactId="EBI-372942">
        <id>Q13287</id>
    </interactant>
    <interactant intactId="EBI-1185693">
        <id>O55170</id>
        <label>Sox10</label>
    </interactant>
    <organismsDiffer>true</organismsDiffer>
    <experiments>4</experiments>
</comment>
<comment type="subcellular location">
    <subcellularLocation>
        <location evidence="4 5 9 11">Cytoplasm</location>
    </subcellularLocation>
    <subcellularLocation>
        <location evidence="5 11">Nucleus</location>
    </subcellularLocation>
    <subcellularLocation>
        <location evidence="7">Secreted</location>
    </subcellularLocation>
    <text evidence="5 7 11">Cytoplasmic NMI localizes in punctate granular structures (PubMed:10950963, PubMed:9781816). Nuclear localization increased following IFN-alpha treatment (PubMed:10950963, PubMed:9781816). Extracelullar following secretion by macrophage (PubMed:29038465).</text>
</comment>
<comment type="tissue specificity">
    <text evidence="7 11">Expressed in adult spleen, liver, and kidney (PubMed:9781816). Expressed in fetal thymus, liver, placenta, spleen, lung, and kidney but not brain (PubMed:9781816). Expressed in macrophages (PubMed:29038465).</text>
</comment>
<comment type="induction">
    <text evidence="4 5 6 11 12">Up-regulated by interferon IFN-alpha and IFN-gamma (PubMed:10779520, PubMed:10950963, PubMed:9781816, PubMed:9989503). Induced by IL2/interleukin-2 (PubMed:9989503). Induced by Sendai virus (PubMed:26342464).</text>
</comment>
<comment type="domain">
    <text evidence="6">The coiled-coil domain is necessary for interaction with TRIM21 and for TRIM21-mediated ubiquitination of NMI.</text>
</comment>
<comment type="domain">
    <text evidence="1 6">The NID domains are necessary for the interaction with IFI35 (PubMed:26342464). The NID domain 1 is necessary and IRF7 (By similarity).</text>
</comment>
<comment type="PTM">
    <text evidence="6">Ubiquitinated. 'Lys-63'-linked ubiquitination by TRIM21 promotes interaction with IFI35 and inhibits virus-triggered type I IFN-beta production.</text>
</comment>
<comment type="similarity">
    <text evidence="15">Belongs to the NMI family.</text>
</comment>
<comment type="caution">
    <text evidence="17">The TRIM21-mediated ubiquitinated residue is not conserved in mice, therefore it remains unclear whether the physiological role of NMI ubiquitination is preserved throughout mammals.</text>
</comment>
<accession>Q13287</accession>
<accession>B5BU69</accession>
<accession>Q53TI8</accession>
<accession>Q8WTW2</accession>
<accession>Q9BVE5</accession>
<evidence type="ECO:0000250" key="1">
    <source>
        <dbReference type="UniProtKB" id="O35309"/>
    </source>
</evidence>
<evidence type="ECO:0000255" key="2"/>
<evidence type="ECO:0000256" key="3">
    <source>
        <dbReference type="SAM" id="MobiDB-lite"/>
    </source>
</evidence>
<evidence type="ECO:0000269" key="4">
    <source>
    </source>
</evidence>
<evidence type="ECO:0000269" key="5">
    <source>
    </source>
</evidence>
<evidence type="ECO:0000269" key="6">
    <source>
    </source>
</evidence>
<evidence type="ECO:0000269" key="7">
    <source>
    </source>
</evidence>
<evidence type="ECO:0000269" key="8">
    <source>
    </source>
</evidence>
<evidence type="ECO:0000269" key="9">
    <source>
    </source>
</evidence>
<evidence type="ECO:0000269" key="10">
    <source>
    </source>
</evidence>
<evidence type="ECO:0000269" key="11">
    <source>
    </source>
</evidence>
<evidence type="ECO:0000269" key="12">
    <source>
    </source>
</evidence>
<evidence type="ECO:0000303" key="13">
    <source>
    </source>
</evidence>
<evidence type="ECO:0000303" key="14">
    <source>
    </source>
</evidence>
<evidence type="ECO:0000305" key="15"/>
<evidence type="ECO:0000305" key="16">
    <source>
    </source>
</evidence>
<evidence type="ECO:0000305" key="17">
    <source>
    </source>
</evidence>
<evidence type="ECO:0000312" key="18">
    <source>
        <dbReference type="HGNC" id="HGNC:7854"/>
    </source>
</evidence>
<evidence type="ECO:0007744" key="19">
    <source>
    </source>
</evidence>
<organism>
    <name type="scientific">Homo sapiens</name>
    <name type="common">Human</name>
    <dbReference type="NCBI Taxonomy" id="9606"/>
    <lineage>
        <taxon>Eukaryota</taxon>
        <taxon>Metazoa</taxon>
        <taxon>Chordata</taxon>
        <taxon>Craniata</taxon>
        <taxon>Vertebrata</taxon>
        <taxon>Euteleostomi</taxon>
        <taxon>Mammalia</taxon>
        <taxon>Eutheria</taxon>
        <taxon>Euarchontoglires</taxon>
        <taxon>Primates</taxon>
        <taxon>Haplorrhini</taxon>
        <taxon>Catarrhini</taxon>
        <taxon>Hominidae</taxon>
        <taxon>Homo</taxon>
    </lineage>
</organism>